<gene>
    <name evidence="1" type="primary">fusA</name>
    <name type="ordered locus">SEQ_0344</name>
</gene>
<sequence length="692" mass="76602">MAREFSLAKTRNIGIMAHVDAGKTTTTERILYYTGKIHKIGETHEGASQMDWMEQEQERGITITSAATTAQWDGHRVNIIDTPGHVDFTIEVQRSLRVLDGAVTVLDSQSGVEPQTETVWRQATEYGVPRIVFANKMDKIGADFLYSVQTLHDRLQANAHPIQLPIGSEDDFRGIIDLIKMKAEIYTNDLGTDILEEDIPEEYLEQAQEYREKLIEAVAETDEDLMMKYLEGEEITNEELVAGIRKATINVEFFPVLCGSAFKNKGVQLMLDAVIAYLPSPLDIPAIKGVNPDTDAEEERPASDEEPFAALAFKIMTDPFVGRLTFFRVYSGVLNSGSYVMNTSKGKRERIGRILQMHANSRQEIETVYAGDIAAAVGLKDTTTGDSLTDEKAKIILESIEVPEPVIQLMVEPKSKADQDKMGIALQKLAEEDPTFRVETNVETGETVIAGMGELHLDVLVDRMRREFKVEANVGAPQVSYRETFRASTQARGFFKRQSGGKGQFGDVWIEFTPNEEGKGFEFENAIVGGVVPREFIPAVEKGLIESMANGVLAGYPMVDVKAKLYDGSYHDVDSSETAFKIAASLALKEAAKTAQPAILEPMMLVTITAPEDNLGDVMGHVTARRGRVDGMEAHGTSQIVRAYVPLAEMFGYATVLRSATQGRGTFMMVFDHYEDVPKSVQEEIIKKNKGE</sequence>
<accession>C0M937</accession>
<name>EFG_STRE4</name>
<reference key="1">
    <citation type="journal article" date="2009" name="PLoS Pathog.">
        <title>Genomic evidence for the evolution of Streptococcus equi: host restriction, increased virulence, and genetic exchange with human pathogens.</title>
        <authorList>
            <person name="Holden M.T.G."/>
            <person name="Heather Z."/>
            <person name="Paillot R."/>
            <person name="Steward K.F."/>
            <person name="Webb K."/>
            <person name="Ainslie F."/>
            <person name="Jourdan T."/>
            <person name="Bason N.C."/>
            <person name="Holroyd N.E."/>
            <person name="Mungall K."/>
            <person name="Quail M.A."/>
            <person name="Sanders M."/>
            <person name="Simmonds M."/>
            <person name="Willey D."/>
            <person name="Brooks K."/>
            <person name="Aanensen D.M."/>
            <person name="Spratt B.G."/>
            <person name="Jolley K.A."/>
            <person name="Maiden M.C.J."/>
            <person name="Kehoe M."/>
            <person name="Chanter N."/>
            <person name="Bentley S.D."/>
            <person name="Robinson C."/>
            <person name="Maskell D.J."/>
            <person name="Parkhill J."/>
            <person name="Waller A.S."/>
        </authorList>
    </citation>
    <scope>NUCLEOTIDE SEQUENCE [LARGE SCALE GENOMIC DNA]</scope>
    <source>
        <strain>4047</strain>
    </source>
</reference>
<dbReference type="EMBL" id="FM204883">
    <property type="protein sequence ID" value="CAW92462.1"/>
    <property type="molecule type" value="Genomic_DNA"/>
</dbReference>
<dbReference type="RefSeq" id="WP_012678553.1">
    <property type="nucleotide sequence ID" value="NC_012471.1"/>
</dbReference>
<dbReference type="SMR" id="C0M937"/>
<dbReference type="GeneID" id="83704173"/>
<dbReference type="KEGG" id="seu:SEQ_0344"/>
<dbReference type="HOGENOM" id="CLU_002794_4_1_9"/>
<dbReference type="OrthoDB" id="9804431at2"/>
<dbReference type="Proteomes" id="UP000001365">
    <property type="component" value="Chromosome"/>
</dbReference>
<dbReference type="GO" id="GO:0005737">
    <property type="term" value="C:cytoplasm"/>
    <property type="evidence" value="ECO:0007669"/>
    <property type="project" value="UniProtKB-SubCell"/>
</dbReference>
<dbReference type="GO" id="GO:0005525">
    <property type="term" value="F:GTP binding"/>
    <property type="evidence" value="ECO:0007669"/>
    <property type="project" value="UniProtKB-UniRule"/>
</dbReference>
<dbReference type="GO" id="GO:0003924">
    <property type="term" value="F:GTPase activity"/>
    <property type="evidence" value="ECO:0007669"/>
    <property type="project" value="InterPro"/>
</dbReference>
<dbReference type="GO" id="GO:0003746">
    <property type="term" value="F:translation elongation factor activity"/>
    <property type="evidence" value="ECO:0007669"/>
    <property type="project" value="UniProtKB-UniRule"/>
</dbReference>
<dbReference type="GO" id="GO:0032790">
    <property type="term" value="P:ribosome disassembly"/>
    <property type="evidence" value="ECO:0007669"/>
    <property type="project" value="TreeGrafter"/>
</dbReference>
<dbReference type="CDD" id="cd01886">
    <property type="entry name" value="EF-G"/>
    <property type="match status" value="1"/>
</dbReference>
<dbReference type="CDD" id="cd16262">
    <property type="entry name" value="EFG_III"/>
    <property type="match status" value="1"/>
</dbReference>
<dbReference type="CDD" id="cd01434">
    <property type="entry name" value="EFG_mtEFG1_IV"/>
    <property type="match status" value="1"/>
</dbReference>
<dbReference type="CDD" id="cd03713">
    <property type="entry name" value="EFG_mtEFG_C"/>
    <property type="match status" value="1"/>
</dbReference>
<dbReference type="CDD" id="cd04088">
    <property type="entry name" value="EFG_mtEFG_II"/>
    <property type="match status" value="1"/>
</dbReference>
<dbReference type="FunFam" id="2.40.30.10:FF:000006">
    <property type="entry name" value="Elongation factor G"/>
    <property type="match status" value="1"/>
</dbReference>
<dbReference type="FunFam" id="3.30.230.10:FF:000003">
    <property type="entry name" value="Elongation factor G"/>
    <property type="match status" value="1"/>
</dbReference>
<dbReference type="FunFam" id="3.30.70.240:FF:000001">
    <property type="entry name" value="Elongation factor G"/>
    <property type="match status" value="1"/>
</dbReference>
<dbReference type="FunFam" id="3.30.70.870:FF:000001">
    <property type="entry name" value="Elongation factor G"/>
    <property type="match status" value="1"/>
</dbReference>
<dbReference type="FunFam" id="3.40.50.300:FF:000029">
    <property type="entry name" value="Elongation factor G"/>
    <property type="match status" value="1"/>
</dbReference>
<dbReference type="Gene3D" id="3.30.230.10">
    <property type="match status" value="1"/>
</dbReference>
<dbReference type="Gene3D" id="3.30.70.240">
    <property type="match status" value="1"/>
</dbReference>
<dbReference type="Gene3D" id="3.30.70.870">
    <property type="entry name" value="Elongation Factor G (Translational Gtpase), domain 3"/>
    <property type="match status" value="1"/>
</dbReference>
<dbReference type="Gene3D" id="3.40.50.300">
    <property type="entry name" value="P-loop containing nucleotide triphosphate hydrolases"/>
    <property type="match status" value="1"/>
</dbReference>
<dbReference type="Gene3D" id="2.40.30.10">
    <property type="entry name" value="Translation factors"/>
    <property type="match status" value="1"/>
</dbReference>
<dbReference type="HAMAP" id="MF_00054_B">
    <property type="entry name" value="EF_G_EF_2_B"/>
    <property type="match status" value="1"/>
</dbReference>
<dbReference type="InterPro" id="IPR041095">
    <property type="entry name" value="EFG_II"/>
</dbReference>
<dbReference type="InterPro" id="IPR009022">
    <property type="entry name" value="EFG_III"/>
</dbReference>
<dbReference type="InterPro" id="IPR035647">
    <property type="entry name" value="EFG_III/V"/>
</dbReference>
<dbReference type="InterPro" id="IPR047872">
    <property type="entry name" value="EFG_IV"/>
</dbReference>
<dbReference type="InterPro" id="IPR035649">
    <property type="entry name" value="EFG_V"/>
</dbReference>
<dbReference type="InterPro" id="IPR000640">
    <property type="entry name" value="EFG_V-like"/>
</dbReference>
<dbReference type="InterPro" id="IPR004161">
    <property type="entry name" value="EFTu-like_2"/>
</dbReference>
<dbReference type="InterPro" id="IPR031157">
    <property type="entry name" value="G_TR_CS"/>
</dbReference>
<dbReference type="InterPro" id="IPR027417">
    <property type="entry name" value="P-loop_NTPase"/>
</dbReference>
<dbReference type="InterPro" id="IPR020568">
    <property type="entry name" value="Ribosomal_Su5_D2-typ_SF"/>
</dbReference>
<dbReference type="InterPro" id="IPR014721">
    <property type="entry name" value="Ribsml_uS5_D2-typ_fold_subgr"/>
</dbReference>
<dbReference type="InterPro" id="IPR005225">
    <property type="entry name" value="Small_GTP-bd"/>
</dbReference>
<dbReference type="InterPro" id="IPR000795">
    <property type="entry name" value="T_Tr_GTP-bd_dom"/>
</dbReference>
<dbReference type="InterPro" id="IPR009000">
    <property type="entry name" value="Transl_B-barrel_sf"/>
</dbReference>
<dbReference type="InterPro" id="IPR004540">
    <property type="entry name" value="Transl_elong_EFG/EF2"/>
</dbReference>
<dbReference type="InterPro" id="IPR005517">
    <property type="entry name" value="Transl_elong_EFG/EF2_IV"/>
</dbReference>
<dbReference type="NCBIfam" id="TIGR00484">
    <property type="entry name" value="EF-G"/>
    <property type="match status" value="1"/>
</dbReference>
<dbReference type="NCBIfam" id="NF009379">
    <property type="entry name" value="PRK12740.1-3"/>
    <property type="match status" value="1"/>
</dbReference>
<dbReference type="NCBIfam" id="NF009381">
    <property type="entry name" value="PRK12740.1-5"/>
    <property type="match status" value="1"/>
</dbReference>
<dbReference type="NCBIfam" id="TIGR00231">
    <property type="entry name" value="small_GTP"/>
    <property type="match status" value="1"/>
</dbReference>
<dbReference type="PANTHER" id="PTHR43261:SF1">
    <property type="entry name" value="RIBOSOME-RELEASING FACTOR 2, MITOCHONDRIAL"/>
    <property type="match status" value="1"/>
</dbReference>
<dbReference type="PANTHER" id="PTHR43261">
    <property type="entry name" value="TRANSLATION ELONGATION FACTOR G-RELATED"/>
    <property type="match status" value="1"/>
</dbReference>
<dbReference type="Pfam" id="PF00679">
    <property type="entry name" value="EFG_C"/>
    <property type="match status" value="1"/>
</dbReference>
<dbReference type="Pfam" id="PF14492">
    <property type="entry name" value="EFG_III"/>
    <property type="match status" value="1"/>
</dbReference>
<dbReference type="Pfam" id="PF03764">
    <property type="entry name" value="EFG_IV"/>
    <property type="match status" value="1"/>
</dbReference>
<dbReference type="Pfam" id="PF00009">
    <property type="entry name" value="GTP_EFTU"/>
    <property type="match status" value="1"/>
</dbReference>
<dbReference type="Pfam" id="PF03144">
    <property type="entry name" value="GTP_EFTU_D2"/>
    <property type="match status" value="1"/>
</dbReference>
<dbReference type="PRINTS" id="PR00315">
    <property type="entry name" value="ELONGATNFCT"/>
</dbReference>
<dbReference type="SMART" id="SM00838">
    <property type="entry name" value="EFG_C"/>
    <property type="match status" value="1"/>
</dbReference>
<dbReference type="SMART" id="SM00889">
    <property type="entry name" value="EFG_IV"/>
    <property type="match status" value="1"/>
</dbReference>
<dbReference type="SUPFAM" id="SSF54980">
    <property type="entry name" value="EF-G C-terminal domain-like"/>
    <property type="match status" value="2"/>
</dbReference>
<dbReference type="SUPFAM" id="SSF52540">
    <property type="entry name" value="P-loop containing nucleoside triphosphate hydrolases"/>
    <property type="match status" value="1"/>
</dbReference>
<dbReference type="SUPFAM" id="SSF54211">
    <property type="entry name" value="Ribosomal protein S5 domain 2-like"/>
    <property type="match status" value="1"/>
</dbReference>
<dbReference type="SUPFAM" id="SSF50447">
    <property type="entry name" value="Translation proteins"/>
    <property type="match status" value="1"/>
</dbReference>
<dbReference type="PROSITE" id="PS00301">
    <property type="entry name" value="G_TR_1"/>
    <property type="match status" value="1"/>
</dbReference>
<dbReference type="PROSITE" id="PS51722">
    <property type="entry name" value="G_TR_2"/>
    <property type="match status" value="1"/>
</dbReference>
<proteinExistence type="inferred from homology"/>
<feature type="chain" id="PRO_1000201487" description="Elongation factor G">
    <location>
        <begin position="1"/>
        <end position="692"/>
    </location>
</feature>
<feature type="domain" description="tr-type G">
    <location>
        <begin position="8"/>
        <end position="282"/>
    </location>
</feature>
<feature type="binding site" evidence="1">
    <location>
        <begin position="17"/>
        <end position="24"/>
    </location>
    <ligand>
        <name>GTP</name>
        <dbReference type="ChEBI" id="CHEBI:37565"/>
    </ligand>
</feature>
<feature type="binding site" evidence="1">
    <location>
        <begin position="81"/>
        <end position="85"/>
    </location>
    <ligand>
        <name>GTP</name>
        <dbReference type="ChEBI" id="CHEBI:37565"/>
    </ligand>
</feature>
<feature type="binding site" evidence="1">
    <location>
        <begin position="135"/>
        <end position="138"/>
    </location>
    <ligand>
        <name>GTP</name>
        <dbReference type="ChEBI" id="CHEBI:37565"/>
    </ligand>
</feature>
<protein>
    <recommendedName>
        <fullName evidence="1">Elongation factor G</fullName>
        <shortName evidence="1">EF-G</shortName>
    </recommendedName>
</protein>
<organism>
    <name type="scientific">Streptococcus equi subsp. equi (strain 4047)</name>
    <dbReference type="NCBI Taxonomy" id="553482"/>
    <lineage>
        <taxon>Bacteria</taxon>
        <taxon>Bacillati</taxon>
        <taxon>Bacillota</taxon>
        <taxon>Bacilli</taxon>
        <taxon>Lactobacillales</taxon>
        <taxon>Streptococcaceae</taxon>
        <taxon>Streptococcus</taxon>
    </lineage>
</organism>
<keyword id="KW-0963">Cytoplasm</keyword>
<keyword id="KW-0251">Elongation factor</keyword>
<keyword id="KW-0342">GTP-binding</keyword>
<keyword id="KW-0547">Nucleotide-binding</keyword>
<keyword id="KW-0648">Protein biosynthesis</keyword>
<evidence type="ECO:0000255" key="1">
    <source>
        <dbReference type="HAMAP-Rule" id="MF_00054"/>
    </source>
</evidence>
<comment type="function">
    <text evidence="1">Catalyzes the GTP-dependent ribosomal translocation step during translation elongation. During this step, the ribosome changes from the pre-translocational (PRE) to the post-translocational (POST) state as the newly formed A-site-bound peptidyl-tRNA and P-site-bound deacylated tRNA move to the P and E sites, respectively. Catalyzes the coordinated movement of the two tRNA molecules, the mRNA and conformational changes in the ribosome.</text>
</comment>
<comment type="subcellular location">
    <subcellularLocation>
        <location evidence="1">Cytoplasm</location>
    </subcellularLocation>
</comment>
<comment type="similarity">
    <text evidence="1">Belongs to the TRAFAC class translation factor GTPase superfamily. Classic translation factor GTPase family. EF-G/EF-2 subfamily.</text>
</comment>